<gene>
    <name type="primary">Irx2</name>
    <name type="synonym">Irx6</name>
    <name type="synonym">Irxa2</name>
</gene>
<organism>
    <name type="scientific">Mus musculus</name>
    <name type="common">Mouse</name>
    <dbReference type="NCBI Taxonomy" id="10090"/>
    <lineage>
        <taxon>Eukaryota</taxon>
        <taxon>Metazoa</taxon>
        <taxon>Chordata</taxon>
        <taxon>Craniata</taxon>
        <taxon>Vertebrata</taxon>
        <taxon>Euteleostomi</taxon>
        <taxon>Mammalia</taxon>
        <taxon>Eutheria</taxon>
        <taxon>Euarchontoglires</taxon>
        <taxon>Glires</taxon>
        <taxon>Rodentia</taxon>
        <taxon>Myomorpha</taxon>
        <taxon>Muroidea</taxon>
        <taxon>Muridae</taxon>
        <taxon>Murinae</taxon>
        <taxon>Mus</taxon>
        <taxon>Mus</taxon>
    </lineage>
</organism>
<proteinExistence type="evidence at transcript level"/>
<keyword id="KW-0238">DNA-binding</keyword>
<keyword id="KW-0371">Homeobox</keyword>
<keyword id="KW-0539">Nucleus</keyword>
<keyword id="KW-0597">Phosphoprotein</keyword>
<keyword id="KW-1185">Reference proteome</keyword>
<evidence type="ECO:0000250" key="1">
    <source>
        <dbReference type="UniProtKB" id="Q9BZI1"/>
    </source>
</evidence>
<evidence type="ECO:0000255" key="2">
    <source>
        <dbReference type="PROSITE-ProRule" id="PRU00108"/>
    </source>
</evidence>
<evidence type="ECO:0000256" key="3">
    <source>
        <dbReference type="SAM" id="MobiDB-lite"/>
    </source>
</evidence>
<evidence type="ECO:0000269" key="4">
    <source>
    </source>
</evidence>
<evidence type="ECO:0000269" key="5">
    <source>
    </source>
</evidence>
<evidence type="ECO:0000269" key="6">
    <source>
    </source>
</evidence>
<evidence type="ECO:0000269" key="7">
    <source>
    </source>
</evidence>
<evidence type="ECO:0000305" key="8"/>
<feature type="chain" id="PRO_0000049154" description="Iroquois-class homeodomain protein IRX-2">
    <location>
        <begin position="1"/>
        <end position="474"/>
    </location>
</feature>
<feature type="DNA-binding region" description="Homeobox; TALE-type" evidence="2">
    <location>
        <begin position="115"/>
        <end position="177"/>
    </location>
</feature>
<feature type="region of interest" description="Disordered" evidence="3">
    <location>
        <begin position="177"/>
        <end position="220"/>
    </location>
</feature>
<feature type="region of interest" description="Disordered" evidence="3">
    <location>
        <begin position="262"/>
        <end position="373"/>
    </location>
</feature>
<feature type="region of interest" description="Disordered" evidence="3">
    <location>
        <begin position="420"/>
        <end position="461"/>
    </location>
</feature>
<feature type="compositionally biased region" description="Basic and acidic residues" evidence="3">
    <location>
        <begin position="196"/>
        <end position="210"/>
    </location>
</feature>
<feature type="compositionally biased region" description="Acidic residues" evidence="3">
    <location>
        <begin position="262"/>
        <end position="275"/>
    </location>
</feature>
<feature type="compositionally biased region" description="Low complexity" evidence="3">
    <location>
        <begin position="293"/>
        <end position="305"/>
    </location>
</feature>
<feature type="compositionally biased region" description="Low complexity" evidence="3">
    <location>
        <begin position="358"/>
        <end position="373"/>
    </location>
</feature>
<feature type="modified residue" description="Phosphoserine" evidence="1">
    <location>
        <position position="187"/>
    </location>
</feature>
<feature type="sequence conflict" description="In Ref. 2; AAF63956." evidence="8" ref="2">
    <original>ALAAPRS</original>
    <variation>GGARA</variation>
    <location>
        <begin position="27"/>
        <end position="33"/>
    </location>
</feature>
<feature type="sequence conflict" description="In Ref. 5." evidence="8" ref="5">
    <original>NK</original>
    <variation>EQ</variation>
    <location>
        <begin position="185"/>
        <end position="186"/>
    </location>
</feature>
<protein>
    <recommendedName>
        <fullName>Iroquois-class homeodomain protein IRX-2</fullName>
    </recommendedName>
    <alternativeName>
        <fullName>Homeodomain protein IRXA2</fullName>
    </alternativeName>
    <alternativeName>
        <fullName>Iroquois homeobox protein 2</fullName>
    </alternativeName>
    <alternativeName>
        <fullName>Iroquois-class homeobox protein Irx6</fullName>
    </alternativeName>
</protein>
<sequence>MSYPQGYLYQAPGSLALYSCPAYGASALAAPRSEELARSASGSAFSPYPGSAAFTAQAATGFGSPLQYSADAAAAAAAGFPSYVGSPYDTHTTGMTGAISYHPYGSAAYPYQLNDPAYRKNATRDATATLKAWLNEHRKNPYPTKGEKIMLAIITKMTLTQVSTWFANARRRLKKENKMTWAPRNKSEDEDEDEGDASRSKEESSDKAQDGTETSAEDEGISLHVDSLTDHSCSAESDGEKLPCRAGDALCESGSECKDKFEDLEDEEDEEDECERDLAPPKPVTSSPLTGVEAPLLSPAPEAAPRGGSGGKTPLGSRTSPGAPPPASKPKLWSLAEIATSDLKQPSLGPGCGPPGLPAAAAPASTGAPPGGSPYSASPLLGRHLYYTSPFYGNYTNYGNLNAALQGQGLLRYNTAASSPGETLHAMPKAASDTGKAGSHSLESHYRPPGGGYEPKKDTSEGCAVVGAGVQTYL</sequence>
<accession>P81066</accession>
<accession>O55121</accession>
<accession>Q3UFG3</accession>
<accession>Q9ERN1</accession>
<accession>Q9JLL4</accession>
<comment type="subcellular location">
    <subcellularLocation>
        <location evidence="8">Nucleus</location>
    </subcellularLocation>
</comment>
<comment type="tissue specificity">
    <text evidence="6">Expressed in specific and overlapping patterns with Irx1 and Irx3 in the developing and adult metanephric kidney. In the adult metanephros, renal expression is found in the loop of Henle in the S3 proximal tubule segment and in the thick ascending limb (TAL) of the distal tubule.</text>
</comment>
<comment type="developmental stage">
    <text evidence="4 5 7">First expressed at 8.0 dpc. During neural tube closure (8.5 dpc), expression appears for the first time in the rhombencephalon in the presumptive region of future rhombomere 4. During neurogenesis (9.5 dpc to 10.5 dpc), predominantly expressed along the anteroposterior axis of the CNS in the mesencephalon, metencephalon and rhombencephalon. Expression is strong in the tectum of the mesencephalon and in the hindbrain, expression is restricted to rhombomeres. Expression in the spinal cord is weak and confined to the alar plate. Beginning at 9.5 dpc, expressed in the epithelial component of the branchial arches and foregut. At 10.5 dpc, expression extends rostrally into the dorsal diencephalon. Starting at the otic vesicle stage, shows regionalized expression in the developing inner ear with expression in the entire otic vesicle from 10.5 dpc onwards. From 10.5 dpc onwards, weak expression begins in the limb bud. Also expressed in other tissues during organogenesis; at 9.5 dpc, expressed in the superficial ectoderm surrounding the body and in the region of the foregut, which will form the pharynx and the lung bud. at 10.5 dpc, found in the cephalic mesenchyme around the optic vesicle. By 12.5 dpc, still expressed in the mesenchyme, and expression begins in specific subsets of post-mitotic cells in the neuroretina. As development ensues, expression increases in the neuroretina and mesenchymal expression gradually decreases. At 16.5 dpc, expressed exclusively in the inner neuroblast layers of the neuroretina. Expressed in the developing heart in the ventricular septum from the onset of its formation (10.5 dpc) onward. In fetal stages, expression becomes confined to the myocardium of the atrioventricular bundle and bundle branches of the forming ventricular conduction system.</text>
</comment>
<comment type="similarity">
    <text evidence="8">Belongs to the TALE/IRO homeobox family.</text>
</comment>
<comment type="caution">
    <text evidence="8">Called Irx6 by PubMed:10704856.</text>
</comment>
<comment type="sequence caution" evidence="8">
    <conflict type="frameshift">
        <sequence resource="EMBL-CDS" id="AAF63956"/>
    </conflict>
</comment>
<reference key="1">
    <citation type="journal article" date="2000" name="Dev. Biol.">
        <title>Patterning the embryonic heart: identification of five mouse Iroquois homeobox genes in the developing heart.</title>
        <authorList>
            <person name="Christoffels V.M."/>
            <person name="Keijser A.G.M."/>
            <person name="Houweling A.C."/>
            <person name="Clout D.E.W."/>
            <person name="Moorman A.F.M."/>
        </authorList>
    </citation>
    <scope>NUCLEOTIDE SEQUENCE [MRNA]</scope>
    <scope>DEVELOPMENTAL STAGE</scope>
    <source>
        <strain>FVB/N</strain>
        <tissue>Embryonic heart</tissue>
    </source>
</reference>
<reference key="2">
    <citation type="journal article" date="2000" name="Mech. Dev.">
        <title>Expression of two novel mouse Iroquois-class homeobox genes during neurogenesis.</title>
        <authorList>
            <person name="Cohen D.R."/>
            <person name="Cheng C.W."/>
            <person name="Cheng S.H."/>
            <person name="Hui C.-C."/>
        </authorList>
    </citation>
    <scope>NUCLEOTIDE SEQUENCE [MRNA]</scope>
    <scope>DEVELOPMENTAL STAGE</scope>
    <source>
        <tissue>Brain</tissue>
    </source>
</reference>
<reference key="3">
    <citation type="journal article" date="2005" name="Science">
        <title>The transcriptional landscape of the mammalian genome.</title>
        <authorList>
            <person name="Carninci P."/>
            <person name="Kasukawa T."/>
            <person name="Katayama S."/>
            <person name="Gough J."/>
            <person name="Frith M.C."/>
            <person name="Maeda N."/>
            <person name="Oyama R."/>
            <person name="Ravasi T."/>
            <person name="Lenhard B."/>
            <person name="Wells C."/>
            <person name="Kodzius R."/>
            <person name="Shimokawa K."/>
            <person name="Bajic V.B."/>
            <person name="Brenner S.E."/>
            <person name="Batalov S."/>
            <person name="Forrest A.R."/>
            <person name="Zavolan M."/>
            <person name="Davis M.J."/>
            <person name="Wilming L.G."/>
            <person name="Aidinis V."/>
            <person name="Allen J.E."/>
            <person name="Ambesi-Impiombato A."/>
            <person name="Apweiler R."/>
            <person name="Aturaliya R.N."/>
            <person name="Bailey T.L."/>
            <person name="Bansal M."/>
            <person name="Baxter L."/>
            <person name="Beisel K.W."/>
            <person name="Bersano T."/>
            <person name="Bono H."/>
            <person name="Chalk A.M."/>
            <person name="Chiu K.P."/>
            <person name="Choudhary V."/>
            <person name="Christoffels A."/>
            <person name="Clutterbuck D.R."/>
            <person name="Crowe M.L."/>
            <person name="Dalla E."/>
            <person name="Dalrymple B.P."/>
            <person name="de Bono B."/>
            <person name="Della Gatta G."/>
            <person name="di Bernardo D."/>
            <person name="Down T."/>
            <person name="Engstrom P."/>
            <person name="Fagiolini M."/>
            <person name="Faulkner G."/>
            <person name="Fletcher C.F."/>
            <person name="Fukushima T."/>
            <person name="Furuno M."/>
            <person name="Futaki S."/>
            <person name="Gariboldi M."/>
            <person name="Georgii-Hemming P."/>
            <person name="Gingeras T.R."/>
            <person name="Gojobori T."/>
            <person name="Green R.E."/>
            <person name="Gustincich S."/>
            <person name="Harbers M."/>
            <person name="Hayashi Y."/>
            <person name="Hensch T.K."/>
            <person name="Hirokawa N."/>
            <person name="Hill D."/>
            <person name="Huminiecki L."/>
            <person name="Iacono M."/>
            <person name="Ikeo K."/>
            <person name="Iwama A."/>
            <person name="Ishikawa T."/>
            <person name="Jakt M."/>
            <person name="Kanapin A."/>
            <person name="Katoh M."/>
            <person name="Kawasawa Y."/>
            <person name="Kelso J."/>
            <person name="Kitamura H."/>
            <person name="Kitano H."/>
            <person name="Kollias G."/>
            <person name="Krishnan S.P."/>
            <person name="Kruger A."/>
            <person name="Kummerfeld S.K."/>
            <person name="Kurochkin I.V."/>
            <person name="Lareau L.F."/>
            <person name="Lazarevic D."/>
            <person name="Lipovich L."/>
            <person name="Liu J."/>
            <person name="Liuni S."/>
            <person name="McWilliam S."/>
            <person name="Madan Babu M."/>
            <person name="Madera M."/>
            <person name="Marchionni L."/>
            <person name="Matsuda H."/>
            <person name="Matsuzawa S."/>
            <person name="Miki H."/>
            <person name="Mignone F."/>
            <person name="Miyake S."/>
            <person name="Morris K."/>
            <person name="Mottagui-Tabar S."/>
            <person name="Mulder N."/>
            <person name="Nakano N."/>
            <person name="Nakauchi H."/>
            <person name="Ng P."/>
            <person name="Nilsson R."/>
            <person name="Nishiguchi S."/>
            <person name="Nishikawa S."/>
            <person name="Nori F."/>
            <person name="Ohara O."/>
            <person name="Okazaki Y."/>
            <person name="Orlando V."/>
            <person name="Pang K.C."/>
            <person name="Pavan W.J."/>
            <person name="Pavesi G."/>
            <person name="Pesole G."/>
            <person name="Petrovsky N."/>
            <person name="Piazza S."/>
            <person name="Reed J."/>
            <person name="Reid J.F."/>
            <person name="Ring B.Z."/>
            <person name="Ringwald M."/>
            <person name="Rost B."/>
            <person name="Ruan Y."/>
            <person name="Salzberg S.L."/>
            <person name="Sandelin A."/>
            <person name="Schneider C."/>
            <person name="Schoenbach C."/>
            <person name="Sekiguchi K."/>
            <person name="Semple C.A."/>
            <person name="Seno S."/>
            <person name="Sessa L."/>
            <person name="Sheng Y."/>
            <person name="Shibata Y."/>
            <person name="Shimada H."/>
            <person name="Shimada K."/>
            <person name="Silva D."/>
            <person name="Sinclair B."/>
            <person name="Sperling S."/>
            <person name="Stupka E."/>
            <person name="Sugiura K."/>
            <person name="Sultana R."/>
            <person name="Takenaka Y."/>
            <person name="Taki K."/>
            <person name="Tammoja K."/>
            <person name="Tan S.L."/>
            <person name="Tang S."/>
            <person name="Taylor M.S."/>
            <person name="Tegner J."/>
            <person name="Teichmann S.A."/>
            <person name="Ueda H.R."/>
            <person name="van Nimwegen E."/>
            <person name="Verardo R."/>
            <person name="Wei C.L."/>
            <person name="Yagi K."/>
            <person name="Yamanishi H."/>
            <person name="Zabarovsky E."/>
            <person name="Zhu S."/>
            <person name="Zimmer A."/>
            <person name="Hide W."/>
            <person name="Bult C."/>
            <person name="Grimmond S.M."/>
            <person name="Teasdale R.D."/>
            <person name="Liu E.T."/>
            <person name="Brusic V."/>
            <person name="Quackenbush J."/>
            <person name="Wahlestedt C."/>
            <person name="Mattick J.S."/>
            <person name="Hume D.A."/>
            <person name="Kai C."/>
            <person name="Sasaki D."/>
            <person name="Tomaru Y."/>
            <person name="Fukuda S."/>
            <person name="Kanamori-Katayama M."/>
            <person name="Suzuki M."/>
            <person name="Aoki J."/>
            <person name="Arakawa T."/>
            <person name="Iida J."/>
            <person name="Imamura K."/>
            <person name="Itoh M."/>
            <person name="Kato T."/>
            <person name="Kawaji H."/>
            <person name="Kawagashira N."/>
            <person name="Kawashima T."/>
            <person name="Kojima M."/>
            <person name="Kondo S."/>
            <person name="Konno H."/>
            <person name="Nakano K."/>
            <person name="Ninomiya N."/>
            <person name="Nishio T."/>
            <person name="Okada M."/>
            <person name="Plessy C."/>
            <person name="Shibata K."/>
            <person name="Shiraki T."/>
            <person name="Suzuki S."/>
            <person name="Tagami M."/>
            <person name="Waki K."/>
            <person name="Watahiki A."/>
            <person name="Okamura-Oho Y."/>
            <person name="Suzuki H."/>
            <person name="Kawai J."/>
            <person name="Hayashizaki Y."/>
        </authorList>
    </citation>
    <scope>NUCLEOTIDE SEQUENCE [LARGE SCALE MRNA]</scope>
    <source>
        <strain>C57BL/6J</strain>
        <tissue>Pancreas</tissue>
    </source>
</reference>
<reference key="4">
    <citation type="journal article" date="2004" name="Genome Res.">
        <title>The status, quality, and expansion of the NIH full-length cDNA project: the Mammalian Gene Collection (MGC).</title>
        <authorList>
            <consortium name="The MGC Project Team"/>
        </authorList>
    </citation>
    <scope>NUCLEOTIDE SEQUENCE [LARGE SCALE MRNA]</scope>
    <source>
        <strain>FVB/N</strain>
        <tissue>Mammary gland</tissue>
    </source>
</reference>
<reference key="5">
    <citation type="journal article" date="1997" name="Mech. Dev.">
        <title>Identification of the vertebrate Iroquois homeobox gene family with overlapping expression during early development of the nervous system.</title>
        <authorList>
            <person name="Bosse A."/>
            <person name="Zulch A."/>
            <person name="Becker M.B."/>
            <person name="Torres M."/>
            <person name="Gomez-Skarmeta J.-L."/>
            <person name="Modolell J."/>
            <person name="Gruss P."/>
        </authorList>
    </citation>
    <scope>NUCLEOTIDE SEQUENCE [MRNA] OF 109-186</scope>
    <scope>DEVELOPMENTAL STAGE</scope>
</reference>
<reference key="6">
    <citation type="journal article" date="2007" name="Genes Dev.">
        <title>The prepattern transcription factor Irx3 directs nephron segment identity.</title>
        <authorList>
            <person name="Reggiani L."/>
            <person name="Raciti D."/>
            <person name="Airik R."/>
            <person name="Kispert A."/>
            <person name="Braendli A.W."/>
        </authorList>
    </citation>
    <scope>TISSUE SPECIFICITY</scope>
</reference>
<name>IRX2_MOUSE</name>
<dbReference type="EMBL" id="AF295369">
    <property type="protein sequence ID" value="AAG10083.1"/>
    <property type="molecule type" value="mRNA"/>
</dbReference>
<dbReference type="EMBL" id="AF165986">
    <property type="protein sequence ID" value="AAF63956.1"/>
    <property type="status" value="ALT_FRAME"/>
    <property type="molecule type" value="mRNA"/>
</dbReference>
<dbReference type="EMBL" id="AK148520">
    <property type="protein sequence ID" value="BAE28598.1"/>
    <property type="molecule type" value="mRNA"/>
</dbReference>
<dbReference type="EMBL" id="BC029750">
    <property type="protein sequence ID" value="AAH29750.1"/>
    <property type="molecule type" value="mRNA"/>
</dbReference>
<dbReference type="EMBL" id="Y15000">
    <property type="protein sequence ID" value="CAA75232.1"/>
    <property type="status" value="ALT_SEQ"/>
    <property type="molecule type" value="mRNA"/>
</dbReference>
<dbReference type="CCDS" id="CCDS26628.1"/>
<dbReference type="RefSeq" id="NP_034704.1">
    <property type="nucleotide sequence ID" value="NM_010574.4"/>
</dbReference>
<dbReference type="SMR" id="P81066"/>
<dbReference type="FunCoup" id="P81066">
    <property type="interactions" value="1076"/>
</dbReference>
<dbReference type="STRING" id="10090.ENSMUSP00000073976"/>
<dbReference type="iPTMnet" id="P81066"/>
<dbReference type="PhosphoSitePlus" id="P81066"/>
<dbReference type="PaxDb" id="10090-ENSMUSP00000073976"/>
<dbReference type="ProteomicsDB" id="269335"/>
<dbReference type="Antibodypedia" id="9121">
    <property type="antibodies" value="186 antibodies from 27 providers"/>
</dbReference>
<dbReference type="DNASU" id="16372"/>
<dbReference type="Ensembl" id="ENSMUST00000074372.6">
    <property type="protein sequence ID" value="ENSMUSP00000073976.5"/>
    <property type="gene ID" value="ENSMUSG00000001504.11"/>
</dbReference>
<dbReference type="GeneID" id="16372"/>
<dbReference type="KEGG" id="mmu:16372"/>
<dbReference type="UCSC" id="uc007rde.1">
    <property type="organism name" value="mouse"/>
</dbReference>
<dbReference type="AGR" id="MGI:1197526"/>
<dbReference type="CTD" id="153572"/>
<dbReference type="MGI" id="MGI:1197526">
    <property type="gene designation" value="Irx2"/>
</dbReference>
<dbReference type="VEuPathDB" id="HostDB:ENSMUSG00000001504"/>
<dbReference type="eggNOG" id="KOG0773">
    <property type="taxonomic scope" value="Eukaryota"/>
</dbReference>
<dbReference type="GeneTree" id="ENSGT00940000161198"/>
<dbReference type="HOGENOM" id="CLU_048118_1_0_1"/>
<dbReference type="InParanoid" id="P81066"/>
<dbReference type="OMA" id="HPHEDAS"/>
<dbReference type="OrthoDB" id="5399138at2759"/>
<dbReference type="PhylomeDB" id="P81066"/>
<dbReference type="TreeFam" id="TF319371"/>
<dbReference type="BioGRID-ORCS" id="16372">
    <property type="hits" value="6 hits in 77 CRISPR screens"/>
</dbReference>
<dbReference type="ChiTaRS" id="Irx2">
    <property type="organism name" value="mouse"/>
</dbReference>
<dbReference type="PRO" id="PR:P81066"/>
<dbReference type="Proteomes" id="UP000000589">
    <property type="component" value="Chromosome 13"/>
</dbReference>
<dbReference type="RNAct" id="P81066">
    <property type="molecule type" value="protein"/>
</dbReference>
<dbReference type="Bgee" id="ENSMUSG00000001504">
    <property type="expression patterns" value="Expressed in pretectal region and 248 other cell types or tissues"/>
</dbReference>
<dbReference type="ExpressionAtlas" id="P81066">
    <property type="expression patterns" value="baseline and differential"/>
</dbReference>
<dbReference type="GO" id="GO:0005654">
    <property type="term" value="C:nucleoplasm"/>
    <property type="evidence" value="ECO:0000304"/>
    <property type="project" value="Reactome"/>
</dbReference>
<dbReference type="GO" id="GO:0001227">
    <property type="term" value="F:DNA-binding transcription repressor activity, RNA polymerase II-specific"/>
    <property type="evidence" value="ECO:0007669"/>
    <property type="project" value="Ensembl"/>
</dbReference>
<dbReference type="GO" id="GO:0043565">
    <property type="term" value="F:sequence-specific DNA binding"/>
    <property type="evidence" value="ECO:0007669"/>
    <property type="project" value="Ensembl"/>
</dbReference>
<dbReference type="GO" id="GO:0001656">
    <property type="term" value="P:metanephros development"/>
    <property type="evidence" value="ECO:0000270"/>
    <property type="project" value="UniProtKB"/>
</dbReference>
<dbReference type="GO" id="GO:0072272">
    <property type="term" value="P:proximal/distal pattern formation involved in metanephric nephron development"/>
    <property type="evidence" value="ECO:0000270"/>
    <property type="project" value="UniProtKB"/>
</dbReference>
<dbReference type="GO" id="GO:0072086">
    <property type="term" value="P:specification of loop of Henle identity"/>
    <property type="evidence" value="ECO:0000270"/>
    <property type="project" value="UniProtKB"/>
</dbReference>
<dbReference type="CDD" id="cd00086">
    <property type="entry name" value="homeodomain"/>
    <property type="match status" value="1"/>
</dbReference>
<dbReference type="FunFam" id="1.10.10.60:FF:000003">
    <property type="entry name" value="Iroquois-class homeobox protein IRX"/>
    <property type="match status" value="1"/>
</dbReference>
<dbReference type="Gene3D" id="1.10.10.60">
    <property type="entry name" value="Homeodomain-like"/>
    <property type="match status" value="1"/>
</dbReference>
<dbReference type="InterPro" id="IPR001356">
    <property type="entry name" value="HD"/>
</dbReference>
<dbReference type="InterPro" id="IPR017970">
    <property type="entry name" value="Homeobox_CS"/>
</dbReference>
<dbReference type="InterPro" id="IPR009057">
    <property type="entry name" value="Homeodomain-like_sf"/>
</dbReference>
<dbReference type="InterPro" id="IPR003893">
    <property type="entry name" value="Iroquois_homeo"/>
</dbReference>
<dbReference type="InterPro" id="IPR008422">
    <property type="entry name" value="KN_HD"/>
</dbReference>
<dbReference type="PANTHER" id="PTHR11211">
    <property type="entry name" value="IROQUOIS-CLASS HOMEODOMAIN PROTEIN IRX"/>
    <property type="match status" value="1"/>
</dbReference>
<dbReference type="PANTHER" id="PTHR11211:SF15">
    <property type="entry name" value="IROQUOIS-CLASS HOMEODOMAIN PROTEIN IRX-2"/>
    <property type="match status" value="1"/>
</dbReference>
<dbReference type="Pfam" id="PF05920">
    <property type="entry name" value="Homeobox_KN"/>
    <property type="match status" value="1"/>
</dbReference>
<dbReference type="SMART" id="SM00389">
    <property type="entry name" value="HOX"/>
    <property type="match status" value="1"/>
</dbReference>
<dbReference type="SMART" id="SM00548">
    <property type="entry name" value="IRO"/>
    <property type="match status" value="1"/>
</dbReference>
<dbReference type="SUPFAM" id="SSF46689">
    <property type="entry name" value="Homeodomain-like"/>
    <property type="match status" value="1"/>
</dbReference>
<dbReference type="PROSITE" id="PS00027">
    <property type="entry name" value="HOMEOBOX_1"/>
    <property type="match status" value="1"/>
</dbReference>
<dbReference type="PROSITE" id="PS50071">
    <property type="entry name" value="HOMEOBOX_2"/>
    <property type="match status" value="1"/>
</dbReference>